<evidence type="ECO:0000250" key="1"/>
<evidence type="ECO:0000255" key="2">
    <source>
        <dbReference type="HAMAP-Rule" id="MF_00100"/>
    </source>
</evidence>
<evidence type="ECO:0000256" key="3">
    <source>
        <dbReference type="SAM" id="MobiDB-lite"/>
    </source>
</evidence>
<protein>
    <recommendedName>
        <fullName evidence="2">Translation initiation factor IF-2</fullName>
    </recommendedName>
</protein>
<sequence>MSEVTVRQLADVVGTPVGRLLEQLREAGIGVDREDAAITEAQKLQLLRYLRHSHGASVEIATPKRITLNRRSHSEIQVNAGGGRSKTVNVEVRKKRTYIKRSAILEQERLAERQREEEEAQAGVQAQQEREARLIAEEEAKRQAAEEEAKRQAAEEEAKRQAAEEEAKRQAEAQVKRRLDVEKKPKNGLEPARTEKPASRKAKPRFRSEDRESEQKQRGTKFGRKELHIAPGKAGTSKRKKFRPQKAAPAAKHGFERPTAPIVHDVSIPETMTVAELAQKMSVKAAEVIKALMKLGIMATINQVLDQDTATIVVEEMGHKPKRLQENTLELELVQAEQEVSRQVSRAAVVTIMGHVDHGKTSLLDYIRRAKVATSEAGGITQHIGAYKVRSDKGEITFIDTPGHAAFTAMRARGAKVTDIVILVVAADDGAMPQTVEAIQHARAAGAPLVVAVNKIDRPDADPDRVKQELANHDVITEEWGGDTQFVNVSAKTGEGIDDLIEAILLQAEVMEIKVSAEGPARGVVIESRLDKGRGPVATILVQSGTLRKGDILLSGVETGRVRAMLTERGQEIIEAGPSTPVEILGLSGTPNAGDEAVVVPDERRAREIAGHRQAKEREVKLARQQSAKLENMFNEMEEGEIRALNLVIKADVQGSAEALSDSLTKLSTDKARVKVVAAGVGGINETDVNLAVASNAVIIGFNVRADAAARRLIAEKGIDLHYYSVIYNAIDEIKGALIGILDPEYREEIIGLARVDDVFRSPKLGAIAGCLVIEGSVRRNNPIRVLRDNIVVFEGQLESLRRFKDDVQEVRAGTECGIGVKDYKDVKVGDQIEVYERVRKEPAL</sequence>
<accession>Q3J9B6</accession>
<organism>
    <name type="scientific">Nitrosococcus oceani (strain ATCC 19707 / BCRC 17464 / JCM 30415 / NCIMB 11848 / C-107)</name>
    <dbReference type="NCBI Taxonomy" id="323261"/>
    <lineage>
        <taxon>Bacteria</taxon>
        <taxon>Pseudomonadati</taxon>
        <taxon>Pseudomonadota</taxon>
        <taxon>Gammaproteobacteria</taxon>
        <taxon>Chromatiales</taxon>
        <taxon>Chromatiaceae</taxon>
        <taxon>Nitrosococcus</taxon>
    </lineage>
</organism>
<keyword id="KW-0963">Cytoplasm</keyword>
<keyword id="KW-0342">GTP-binding</keyword>
<keyword id="KW-0396">Initiation factor</keyword>
<keyword id="KW-0547">Nucleotide-binding</keyword>
<keyword id="KW-0648">Protein biosynthesis</keyword>
<keyword id="KW-1185">Reference proteome</keyword>
<proteinExistence type="inferred from homology"/>
<comment type="function">
    <text evidence="2">One of the essential components for the initiation of protein synthesis. Protects formylmethionyl-tRNA from spontaneous hydrolysis and promotes its binding to the 30S ribosomal subunits. Also involved in the hydrolysis of GTP during the formation of the 70S ribosomal complex.</text>
</comment>
<comment type="subcellular location">
    <subcellularLocation>
        <location evidence="2">Cytoplasm</location>
    </subcellularLocation>
</comment>
<comment type="similarity">
    <text evidence="2">Belongs to the TRAFAC class translation factor GTPase superfamily. Classic translation factor GTPase family. IF-2 subfamily.</text>
</comment>
<name>IF2_NITOC</name>
<reference key="1">
    <citation type="journal article" date="2006" name="Appl. Environ. Microbiol.">
        <title>Complete genome sequence of the marine, chemolithoautotrophic, ammonia-oxidizing bacterium Nitrosococcus oceani ATCC 19707.</title>
        <authorList>
            <person name="Klotz M.G."/>
            <person name="Arp D.J."/>
            <person name="Chain P.S.G."/>
            <person name="El-Sheikh A.F."/>
            <person name="Hauser L.J."/>
            <person name="Hommes N.G."/>
            <person name="Larimer F.W."/>
            <person name="Malfatti S.A."/>
            <person name="Norton J.M."/>
            <person name="Poret-Peterson A.T."/>
            <person name="Vergez L.M."/>
            <person name="Ward B.B."/>
        </authorList>
    </citation>
    <scope>NUCLEOTIDE SEQUENCE [LARGE SCALE GENOMIC DNA]</scope>
    <source>
        <strain>ATCC 19707 / BCRC 17464 / JCM 30415 / NCIMB 11848 / C-107</strain>
    </source>
</reference>
<gene>
    <name evidence="2" type="primary">infB</name>
    <name type="ordered locus">Noc_2120</name>
</gene>
<dbReference type="EMBL" id="CP000127">
    <property type="protein sequence ID" value="ABA58580.1"/>
    <property type="molecule type" value="Genomic_DNA"/>
</dbReference>
<dbReference type="RefSeq" id="WP_011330866.1">
    <property type="nucleotide sequence ID" value="NC_007484.1"/>
</dbReference>
<dbReference type="SMR" id="Q3J9B6"/>
<dbReference type="FunCoup" id="Q3J9B6">
    <property type="interactions" value="607"/>
</dbReference>
<dbReference type="STRING" id="323261.Noc_2120"/>
<dbReference type="KEGG" id="noc:Noc_2120"/>
<dbReference type="eggNOG" id="COG0532">
    <property type="taxonomic scope" value="Bacteria"/>
</dbReference>
<dbReference type="HOGENOM" id="CLU_006301_6_1_6"/>
<dbReference type="InParanoid" id="Q3J9B6"/>
<dbReference type="Proteomes" id="UP000006838">
    <property type="component" value="Chromosome"/>
</dbReference>
<dbReference type="GO" id="GO:0005829">
    <property type="term" value="C:cytosol"/>
    <property type="evidence" value="ECO:0007669"/>
    <property type="project" value="TreeGrafter"/>
</dbReference>
<dbReference type="GO" id="GO:0005525">
    <property type="term" value="F:GTP binding"/>
    <property type="evidence" value="ECO:0007669"/>
    <property type="project" value="UniProtKB-KW"/>
</dbReference>
<dbReference type="GO" id="GO:0003924">
    <property type="term" value="F:GTPase activity"/>
    <property type="evidence" value="ECO:0007669"/>
    <property type="project" value="UniProtKB-UniRule"/>
</dbReference>
<dbReference type="GO" id="GO:0097216">
    <property type="term" value="F:guanosine tetraphosphate binding"/>
    <property type="evidence" value="ECO:0007669"/>
    <property type="project" value="UniProtKB-ARBA"/>
</dbReference>
<dbReference type="GO" id="GO:0003743">
    <property type="term" value="F:translation initiation factor activity"/>
    <property type="evidence" value="ECO:0007669"/>
    <property type="project" value="UniProtKB-UniRule"/>
</dbReference>
<dbReference type="CDD" id="cd01887">
    <property type="entry name" value="IF2_eIF5B"/>
    <property type="match status" value="1"/>
</dbReference>
<dbReference type="CDD" id="cd03702">
    <property type="entry name" value="IF2_mtIF2_II"/>
    <property type="match status" value="1"/>
</dbReference>
<dbReference type="CDD" id="cd03692">
    <property type="entry name" value="mtIF2_IVc"/>
    <property type="match status" value="1"/>
</dbReference>
<dbReference type="FunFam" id="2.40.30.10:FF:000007">
    <property type="entry name" value="Translation initiation factor IF-2"/>
    <property type="match status" value="1"/>
</dbReference>
<dbReference type="FunFam" id="2.40.30.10:FF:000008">
    <property type="entry name" value="Translation initiation factor IF-2"/>
    <property type="match status" value="1"/>
</dbReference>
<dbReference type="FunFam" id="3.40.50.10050:FF:000001">
    <property type="entry name" value="Translation initiation factor IF-2"/>
    <property type="match status" value="1"/>
</dbReference>
<dbReference type="FunFam" id="3.40.50.300:FF:000019">
    <property type="entry name" value="Translation initiation factor IF-2"/>
    <property type="match status" value="1"/>
</dbReference>
<dbReference type="Gene3D" id="3.40.50.300">
    <property type="entry name" value="P-loop containing nucleotide triphosphate hydrolases"/>
    <property type="match status" value="1"/>
</dbReference>
<dbReference type="Gene3D" id="3.30.56.50">
    <property type="entry name" value="Putative DNA-binding domain, N-terminal subdomain of bacterial translation initiation factor IF2"/>
    <property type="match status" value="1"/>
</dbReference>
<dbReference type="Gene3D" id="2.40.30.10">
    <property type="entry name" value="Translation factors"/>
    <property type="match status" value="2"/>
</dbReference>
<dbReference type="Gene3D" id="3.40.50.10050">
    <property type="entry name" value="Translation initiation factor IF- 2, domain 3"/>
    <property type="match status" value="1"/>
</dbReference>
<dbReference type="HAMAP" id="MF_00100_B">
    <property type="entry name" value="IF_2_B"/>
    <property type="match status" value="1"/>
</dbReference>
<dbReference type="InterPro" id="IPR009061">
    <property type="entry name" value="DNA-bd_dom_put_sf"/>
</dbReference>
<dbReference type="InterPro" id="IPR053905">
    <property type="entry name" value="EF-G-like_DII"/>
</dbReference>
<dbReference type="InterPro" id="IPR004161">
    <property type="entry name" value="EFTu-like_2"/>
</dbReference>
<dbReference type="InterPro" id="IPR013575">
    <property type="entry name" value="IF2_assoc_dom_bac"/>
</dbReference>
<dbReference type="InterPro" id="IPR044145">
    <property type="entry name" value="IF2_II"/>
</dbReference>
<dbReference type="InterPro" id="IPR006847">
    <property type="entry name" value="IF2_N"/>
</dbReference>
<dbReference type="InterPro" id="IPR027417">
    <property type="entry name" value="P-loop_NTPase"/>
</dbReference>
<dbReference type="InterPro" id="IPR005225">
    <property type="entry name" value="Small_GTP-bd"/>
</dbReference>
<dbReference type="InterPro" id="IPR000795">
    <property type="entry name" value="T_Tr_GTP-bd_dom"/>
</dbReference>
<dbReference type="InterPro" id="IPR000178">
    <property type="entry name" value="TF_IF2_bacterial-like"/>
</dbReference>
<dbReference type="InterPro" id="IPR015760">
    <property type="entry name" value="TIF_IF2"/>
</dbReference>
<dbReference type="InterPro" id="IPR023115">
    <property type="entry name" value="TIF_IF2_dom3"/>
</dbReference>
<dbReference type="InterPro" id="IPR036925">
    <property type="entry name" value="TIF_IF2_dom3_sf"/>
</dbReference>
<dbReference type="InterPro" id="IPR009000">
    <property type="entry name" value="Transl_B-barrel_sf"/>
</dbReference>
<dbReference type="NCBIfam" id="TIGR00487">
    <property type="entry name" value="IF-2"/>
    <property type="match status" value="1"/>
</dbReference>
<dbReference type="NCBIfam" id="TIGR00231">
    <property type="entry name" value="small_GTP"/>
    <property type="match status" value="1"/>
</dbReference>
<dbReference type="PANTHER" id="PTHR43381:SF5">
    <property type="entry name" value="TR-TYPE G DOMAIN-CONTAINING PROTEIN"/>
    <property type="match status" value="1"/>
</dbReference>
<dbReference type="PANTHER" id="PTHR43381">
    <property type="entry name" value="TRANSLATION INITIATION FACTOR IF-2-RELATED"/>
    <property type="match status" value="1"/>
</dbReference>
<dbReference type="Pfam" id="PF22042">
    <property type="entry name" value="EF-G_D2"/>
    <property type="match status" value="1"/>
</dbReference>
<dbReference type="Pfam" id="PF00009">
    <property type="entry name" value="GTP_EFTU"/>
    <property type="match status" value="1"/>
</dbReference>
<dbReference type="Pfam" id="PF03144">
    <property type="entry name" value="GTP_EFTU_D2"/>
    <property type="match status" value="1"/>
</dbReference>
<dbReference type="Pfam" id="PF11987">
    <property type="entry name" value="IF-2"/>
    <property type="match status" value="1"/>
</dbReference>
<dbReference type="Pfam" id="PF08364">
    <property type="entry name" value="IF2_assoc"/>
    <property type="match status" value="1"/>
</dbReference>
<dbReference type="Pfam" id="PF04760">
    <property type="entry name" value="IF2_N"/>
    <property type="match status" value="1"/>
</dbReference>
<dbReference type="SUPFAM" id="SSF52156">
    <property type="entry name" value="Initiation factor IF2/eIF5b, domain 3"/>
    <property type="match status" value="1"/>
</dbReference>
<dbReference type="SUPFAM" id="SSF52540">
    <property type="entry name" value="P-loop containing nucleoside triphosphate hydrolases"/>
    <property type="match status" value="1"/>
</dbReference>
<dbReference type="SUPFAM" id="SSF46955">
    <property type="entry name" value="Putative DNA-binding domain"/>
    <property type="match status" value="1"/>
</dbReference>
<dbReference type="SUPFAM" id="SSF50447">
    <property type="entry name" value="Translation proteins"/>
    <property type="match status" value="2"/>
</dbReference>
<dbReference type="PROSITE" id="PS51722">
    <property type="entry name" value="G_TR_2"/>
    <property type="match status" value="1"/>
</dbReference>
<dbReference type="PROSITE" id="PS01176">
    <property type="entry name" value="IF2"/>
    <property type="match status" value="1"/>
</dbReference>
<feature type="chain" id="PRO_0000228218" description="Translation initiation factor IF-2">
    <location>
        <begin position="1"/>
        <end position="845"/>
    </location>
</feature>
<feature type="domain" description="tr-type G">
    <location>
        <begin position="345"/>
        <end position="512"/>
    </location>
</feature>
<feature type="region of interest" description="Disordered" evidence="3">
    <location>
        <begin position="139"/>
        <end position="253"/>
    </location>
</feature>
<feature type="region of interest" description="G1" evidence="1">
    <location>
        <begin position="354"/>
        <end position="361"/>
    </location>
</feature>
<feature type="region of interest" description="G2" evidence="1">
    <location>
        <begin position="379"/>
        <end position="383"/>
    </location>
</feature>
<feature type="region of interest" description="G3" evidence="1">
    <location>
        <begin position="400"/>
        <end position="403"/>
    </location>
</feature>
<feature type="region of interest" description="G4" evidence="1">
    <location>
        <begin position="454"/>
        <end position="457"/>
    </location>
</feature>
<feature type="region of interest" description="G5" evidence="1">
    <location>
        <begin position="490"/>
        <end position="492"/>
    </location>
</feature>
<feature type="compositionally biased region" description="Basic and acidic residues" evidence="3">
    <location>
        <begin position="139"/>
        <end position="198"/>
    </location>
</feature>
<feature type="compositionally biased region" description="Basic and acidic residues" evidence="3">
    <location>
        <begin position="206"/>
        <end position="228"/>
    </location>
</feature>
<feature type="binding site" evidence="2">
    <location>
        <begin position="354"/>
        <end position="361"/>
    </location>
    <ligand>
        <name>GTP</name>
        <dbReference type="ChEBI" id="CHEBI:37565"/>
    </ligand>
</feature>
<feature type="binding site" evidence="2">
    <location>
        <begin position="400"/>
        <end position="404"/>
    </location>
    <ligand>
        <name>GTP</name>
        <dbReference type="ChEBI" id="CHEBI:37565"/>
    </ligand>
</feature>
<feature type="binding site" evidence="2">
    <location>
        <begin position="454"/>
        <end position="457"/>
    </location>
    <ligand>
        <name>GTP</name>
        <dbReference type="ChEBI" id="CHEBI:37565"/>
    </ligand>
</feature>